<feature type="chain" id="PRO_0000456270" description="5-hmdU DNA kinase">
    <location>
        <begin position="1"/>
        <end position="189"/>
    </location>
</feature>
<name>HMUDK_BPPAM</name>
<reference key="1">
    <citation type="journal article" date="2012" name="Appl. Environ. Microbiol.">
        <title>High Diversity and Novel Species of Pseudomonas aeruginosa Bacteriophages.</title>
        <authorList>
            <person name="Sepulveda-Robles O."/>
            <person name="Kameyama L."/>
            <person name="Guarneros G."/>
        </authorList>
    </citation>
    <scope>NUCLEOTIDE SEQUENCE [LARGE SCALE GENOMIC DNA]</scope>
</reference>
<reference key="2">
    <citation type="journal article" date="2021" name="Nucleic Acids Res.">
        <title>Pathways of thymidine hypermodification.</title>
        <authorList>
            <person name="Lee Y.J."/>
            <person name="Dai N."/>
            <person name="Mueller S.I."/>
            <person name="Guan C."/>
            <person name="Parker M.J."/>
            <person name="Fraser M.E."/>
            <person name="Walsh S.E."/>
            <person name="Sridar J."/>
            <person name="Mulholland A."/>
            <person name="Nayak K."/>
            <person name="Sun Z."/>
            <person name="Lin Y.C."/>
            <person name="Comb D.G."/>
            <person name="Marks K."/>
            <person name="Gonzalez R."/>
            <person name="Dowling D.P."/>
            <person name="Bandarian V."/>
            <person name="Saleh L."/>
            <person name="Correa I.R."/>
            <person name="Weigele P.R."/>
        </authorList>
    </citation>
    <scope>FUNCTION</scope>
    <scope>CATALYTIC ACTIVITY</scope>
</reference>
<dbReference type="EMBL" id="JQ067087">
    <property type="protein sequence ID" value="ALH23723.1"/>
    <property type="molecule type" value="Genomic_DNA"/>
</dbReference>
<dbReference type="RefSeq" id="YP_009196302.1">
    <property type="nucleotide sequence ID" value="NC_028770.1"/>
</dbReference>
<dbReference type="SMR" id="A0A0S0N9S9"/>
<dbReference type="GeneID" id="26623527"/>
<dbReference type="KEGG" id="vg:26623527"/>
<dbReference type="OrthoDB" id="29299at10239"/>
<dbReference type="Proteomes" id="UP000204009">
    <property type="component" value="Genome"/>
</dbReference>
<dbReference type="GO" id="GO:0099018">
    <property type="term" value="P:symbiont-mediated evasion of host restriction-modification system"/>
    <property type="evidence" value="ECO:0007669"/>
    <property type="project" value="UniProtKB-KW"/>
</dbReference>
<dbReference type="GO" id="GO:0052170">
    <property type="term" value="P:symbiont-mediated suppression of host innate immune response"/>
    <property type="evidence" value="ECO:0007669"/>
    <property type="project" value="UniProtKB-KW"/>
</dbReference>
<dbReference type="Gene3D" id="3.40.50.300">
    <property type="entry name" value="P-loop containing nucleotide triphosphate hydrolases"/>
    <property type="match status" value="1"/>
</dbReference>
<dbReference type="InterPro" id="IPR027417">
    <property type="entry name" value="P-loop_NTPase"/>
</dbReference>
<dbReference type="SUPFAM" id="SSF52540">
    <property type="entry name" value="P-loop containing nucleoside triphosphate hydrolases"/>
    <property type="match status" value="1"/>
</dbReference>
<accession>A0A0S0N9S9</accession>
<organism>
    <name type="scientific">Pseudomonas phage PaMx11</name>
    <dbReference type="NCBI Taxonomy" id="1175657"/>
    <lineage>
        <taxon>Viruses</taxon>
        <taxon>Duplodnaviria</taxon>
        <taxon>Heunggongvirae</taxon>
        <taxon>Uroviricota</taxon>
        <taxon>Caudoviricetes</taxon>
        <taxon>Mesyanzhinovviridae</taxon>
        <taxon>Bradleyvirinae</taxon>
        <taxon>Abidjanvirus</taxon>
        <taxon>Pseudomonas virus PaMx11</taxon>
    </lineage>
</organism>
<protein>
    <recommendedName>
        <fullName evidence="2">5-hmdU DNA kinase</fullName>
    </recommendedName>
    <alternativeName>
        <fullName evidence="2">5-hydroxymethyluracil DNA kinase</fullName>
    </alternativeName>
    <alternativeName>
        <fullName evidence="2">P-loop kinase</fullName>
    </alternativeName>
    <alternativeName>
        <fullName evidence="2">gp49</fullName>
    </alternativeName>
</protein>
<sequence length="189" mass="20933">MAKQRVINIRGTSGSGKSTLIRRLVELYPEKEPVHVPDRKQPLFYKLRGDGLLPLSLLGHYETACGGCDTIPSMDRIYELVRERLAEGDSVLYEGLLISAEVNRAVALHTDGFDLTVVRLNTPLELCVDSVNQRRWAKNPDKPGVNPKNTEAKFKQTLATCKKLDAAGIPVVEADRDGAFHAIKQLLEA</sequence>
<gene>
    <name evidence="4" type="ORF">PaMx11_49</name>
</gene>
<proteinExistence type="evidence at protein level"/>
<organismHost>
    <name type="scientific">Pseudomonas aeruginosa</name>
    <dbReference type="NCBI Taxonomy" id="287"/>
</organismHost>
<comment type="function">
    <text evidence="1">Phosphorylates 5-hydroxymethyluracil (5hmdU) into 5-phosphomethyl-2'-deoxyuridine (5- PmdU) on DNA as a step in the pathway leading to thymidine hypermodifications in the viral genome (PubMed:34522950). The phosphate is added internally to the DNA polymer (PubMed:34522950). As a final result of the pathway of hypermodification, 5-AcNmdU substitutes for a subset of thymidines in the viral DNA (PubMed:34522950). These modifications probably prevent degradation of viral genome by the host restriction-modification antiviral defense system (PubMed:34522950).</text>
</comment>
<comment type="catalytic activity">
    <reaction evidence="1">
        <text>5-hydroxymethyl-dUMP in DNA + ATP = 5-phosphomethyl-dUMP in DNA + ADP + H(+)</text>
        <dbReference type="Rhea" id="RHEA:71543"/>
        <dbReference type="Rhea" id="RHEA-COMP:18039"/>
        <dbReference type="Rhea" id="RHEA-COMP:18041"/>
        <dbReference type="ChEBI" id="CHEBI:15378"/>
        <dbReference type="ChEBI" id="CHEBI:30616"/>
        <dbReference type="ChEBI" id="CHEBI:190917"/>
        <dbReference type="ChEBI" id="CHEBI:190918"/>
        <dbReference type="ChEBI" id="CHEBI:456216"/>
    </reaction>
</comment>
<comment type="similarity">
    <text evidence="3">Belongs to the thymidylate kinase family. 5-hmdU DNA kinase subfamily.</text>
</comment>
<evidence type="ECO:0000269" key="1">
    <source>
    </source>
</evidence>
<evidence type="ECO:0000303" key="2">
    <source>
    </source>
</evidence>
<evidence type="ECO:0000305" key="3"/>
<evidence type="ECO:0000312" key="4">
    <source>
        <dbReference type="EMBL" id="ALH23723.1"/>
    </source>
</evidence>
<keyword id="KW-0945">Host-virus interaction</keyword>
<keyword id="KW-1090">Inhibition of host innate immune response by virus</keyword>
<keyword id="KW-1185">Reference proteome</keyword>
<keyword id="KW-1258">Restriction-modification system evasion by virus</keyword>
<keyword id="KW-0899">Viral immunoevasion</keyword>